<sequence>MIEFGDFYRLIAKGPLSPWLDTLPAQLSAWQRESLHGKFKTWFNAVEHLPQLTPTTLDLHSGVRAEMSPPISAGQREGMENMLRALMPWRKGPFSLYGLDIDTEWRSDWKWQRVLPHISPLAGRTILDVGCGSGYHLWRMIGEGAHLAVGIDPMQLFLCQFEAIRKLLGGDQRAHVLPLGIEQLPELAAFDTVFSMGVLYHRRSPLDHLYQLKNQLVTDGELVLETLVVEGDSQQVLVPGDRYAQMRNVYFIPSAPALKAWLEKCGFVDVRIADMAVTTTEEQRRTDWMTSESLAEFLDPHDHSKTVEGYPAPLRAVLIARKP</sequence>
<feature type="chain" id="PRO_0000313993" description="tRNA U34 carboxymethyltransferase">
    <location>
        <begin position="1"/>
        <end position="323"/>
    </location>
</feature>
<feature type="binding site" evidence="1">
    <location>
        <position position="91"/>
    </location>
    <ligand>
        <name>carboxy-S-adenosyl-L-methionine</name>
        <dbReference type="ChEBI" id="CHEBI:134278"/>
    </ligand>
</feature>
<feature type="binding site" evidence="1">
    <location>
        <position position="105"/>
    </location>
    <ligand>
        <name>carboxy-S-adenosyl-L-methionine</name>
        <dbReference type="ChEBI" id="CHEBI:134278"/>
    </ligand>
</feature>
<feature type="binding site" evidence="1">
    <location>
        <position position="110"/>
    </location>
    <ligand>
        <name>carboxy-S-adenosyl-L-methionine</name>
        <dbReference type="ChEBI" id="CHEBI:134278"/>
    </ligand>
</feature>
<feature type="binding site" evidence="1">
    <location>
        <position position="130"/>
    </location>
    <ligand>
        <name>carboxy-S-adenosyl-L-methionine</name>
        <dbReference type="ChEBI" id="CHEBI:134278"/>
    </ligand>
</feature>
<feature type="binding site" evidence="1">
    <location>
        <begin position="181"/>
        <end position="182"/>
    </location>
    <ligand>
        <name>carboxy-S-adenosyl-L-methionine</name>
        <dbReference type="ChEBI" id="CHEBI:134278"/>
    </ligand>
</feature>
<feature type="binding site" evidence="1">
    <location>
        <position position="196"/>
    </location>
    <ligand>
        <name>carboxy-S-adenosyl-L-methionine</name>
        <dbReference type="ChEBI" id="CHEBI:134278"/>
    </ligand>
</feature>
<feature type="binding site" evidence="1">
    <location>
        <position position="200"/>
    </location>
    <ligand>
        <name>carboxy-S-adenosyl-L-methionine</name>
        <dbReference type="ChEBI" id="CHEBI:134278"/>
    </ligand>
</feature>
<feature type="binding site" evidence="1">
    <location>
        <position position="315"/>
    </location>
    <ligand>
        <name>carboxy-S-adenosyl-L-methionine</name>
        <dbReference type="ChEBI" id="CHEBI:134278"/>
    </ligand>
</feature>
<protein>
    <recommendedName>
        <fullName evidence="1">tRNA U34 carboxymethyltransferase</fullName>
        <ecNumber evidence="1">2.5.1.-</ecNumber>
    </recommendedName>
</protein>
<gene>
    <name evidence="1" type="primary">cmoB</name>
    <name type="ordered locus">YPO2049</name>
    <name type="ordered locus">y2262</name>
    <name type="ordered locus">YP_1892</name>
</gene>
<keyword id="KW-1185">Reference proteome</keyword>
<keyword id="KW-0808">Transferase</keyword>
<keyword id="KW-0819">tRNA processing</keyword>
<proteinExistence type="inferred from homology"/>
<evidence type="ECO:0000255" key="1">
    <source>
        <dbReference type="HAMAP-Rule" id="MF_01590"/>
    </source>
</evidence>
<organism>
    <name type="scientific">Yersinia pestis</name>
    <dbReference type="NCBI Taxonomy" id="632"/>
    <lineage>
        <taxon>Bacteria</taxon>
        <taxon>Pseudomonadati</taxon>
        <taxon>Pseudomonadota</taxon>
        <taxon>Gammaproteobacteria</taxon>
        <taxon>Enterobacterales</taxon>
        <taxon>Yersiniaceae</taxon>
        <taxon>Yersinia</taxon>
    </lineage>
</organism>
<comment type="function">
    <text evidence="1">Catalyzes carboxymethyl transfer from carboxy-S-adenosyl-L-methionine (Cx-SAM) to 5-hydroxyuridine (ho5U) to form 5-carboxymethoxyuridine (cmo5U) at position 34 in tRNAs.</text>
</comment>
<comment type="catalytic activity">
    <reaction evidence="1">
        <text>carboxy-S-adenosyl-L-methionine + 5-hydroxyuridine(34) in tRNA = 5-carboxymethoxyuridine(34) in tRNA + S-adenosyl-L-homocysteine + H(+)</text>
        <dbReference type="Rhea" id="RHEA:52848"/>
        <dbReference type="Rhea" id="RHEA-COMP:13381"/>
        <dbReference type="Rhea" id="RHEA-COMP:13383"/>
        <dbReference type="ChEBI" id="CHEBI:15378"/>
        <dbReference type="ChEBI" id="CHEBI:57856"/>
        <dbReference type="ChEBI" id="CHEBI:134278"/>
        <dbReference type="ChEBI" id="CHEBI:136877"/>
        <dbReference type="ChEBI" id="CHEBI:136879"/>
    </reaction>
</comment>
<comment type="subunit">
    <text evidence="1">Homotetramer.</text>
</comment>
<comment type="similarity">
    <text evidence="1">Belongs to the class I-like SAM-binding methyltransferase superfamily. CmoB family.</text>
</comment>
<reference key="1">
    <citation type="journal article" date="2001" name="Nature">
        <title>Genome sequence of Yersinia pestis, the causative agent of plague.</title>
        <authorList>
            <person name="Parkhill J."/>
            <person name="Wren B.W."/>
            <person name="Thomson N.R."/>
            <person name="Titball R.W."/>
            <person name="Holden M.T.G."/>
            <person name="Prentice M.B."/>
            <person name="Sebaihia M."/>
            <person name="James K.D."/>
            <person name="Churcher C.M."/>
            <person name="Mungall K.L."/>
            <person name="Baker S."/>
            <person name="Basham D."/>
            <person name="Bentley S.D."/>
            <person name="Brooks K."/>
            <person name="Cerdeno-Tarraga A.-M."/>
            <person name="Chillingworth T."/>
            <person name="Cronin A."/>
            <person name="Davies R.M."/>
            <person name="Davis P."/>
            <person name="Dougan G."/>
            <person name="Feltwell T."/>
            <person name="Hamlin N."/>
            <person name="Holroyd S."/>
            <person name="Jagels K."/>
            <person name="Karlyshev A.V."/>
            <person name="Leather S."/>
            <person name="Moule S."/>
            <person name="Oyston P.C.F."/>
            <person name="Quail M.A."/>
            <person name="Rutherford K.M."/>
            <person name="Simmonds M."/>
            <person name="Skelton J."/>
            <person name="Stevens K."/>
            <person name="Whitehead S."/>
            <person name="Barrell B.G."/>
        </authorList>
    </citation>
    <scope>NUCLEOTIDE SEQUENCE [LARGE SCALE GENOMIC DNA]</scope>
    <source>
        <strain>CO-92 / Biovar Orientalis</strain>
    </source>
</reference>
<reference key="2">
    <citation type="journal article" date="2002" name="J. Bacteriol.">
        <title>Genome sequence of Yersinia pestis KIM.</title>
        <authorList>
            <person name="Deng W."/>
            <person name="Burland V."/>
            <person name="Plunkett G. III"/>
            <person name="Boutin A."/>
            <person name="Mayhew G.F."/>
            <person name="Liss P."/>
            <person name="Perna N.T."/>
            <person name="Rose D.J."/>
            <person name="Mau B."/>
            <person name="Zhou S."/>
            <person name="Schwartz D.C."/>
            <person name="Fetherston J.D."/>
            <person name="Lindler L.E."/>
            <person name="Brubaker R.R."/>
            <person name="Plano G.V."/>
            <person name="Straley S.C."/>
            <person name="McDonough K.A."/>
            <person name="Nilles M.L."/>
            <person name="Matson J.S."/>
            <person name="Blattner F.R."/>
            <person name="Perry R.D."/>
        </authorList>
    </citation>
    <scope>NUCLEOTIDE SEQUENCE [LARGE SCALE GENOMIC DNA]</scope>
    <source>
        <strain>KIM10+ / Biovar Mediaevalis</strain>
    </source>
</reference>
<reference key="3">
    <citation type="journal article" date="2004" name="DNA Res.">
        <title>Complete genome sequence of Yersinia pestis strain 91001, an isolate avirulent to humans.</title>
        <authorList>
            <person name="Song Y."/>
            <person name="Tong Z."/>
            <person name="Wang J."/>
            <person name="Wang L."/>
            <person name="Guo Z."/>
            <person name="Han Y."/>
            <person name="Zhang J."/>
            <person name="Pei D."/>
            <person name="Zhou D."/>
            <person name="Qin H."/>
            <person name="Pang X."/>
            <person name="Han Y."/>
            <person name="Zhai J."/>
            <person name="Li M."/>
            <person name="Cui B."/>
            <person name="Qi Z."/>
            <person name="Jin L."/>
            <person name="Dai R."/>
            <person name="Chen F."/>
            <person name="Li S."/>
            <person name="Ye C."/>
            <person name="Du Z."/>
            <person name="Lin W."/>
            <person name="Wang J."/>
            <person name="Yu J."/>
            <person name="Yang H."/>
            <person name="Wang J."/>
            <person name="Huang P."/>
            <person name="Yang R."/>
        </authorList>
    </citation>
    <scope>NUCLEOTIDE SEQUENCE [LARGE SCALE GENOMIC DNA]</scope>
    <source>
        <strain>91001 / Biovar Mediaevalis</strain>
    </source>
</reference>
<dbReference type="EC" id="2.5.1.-" evidence="1"/>
<dbReference type="EMBL" id="AL590842">
    <property type="protein sequence ID" value="CAL20684.1"/>
    <property type="molecule type" value="Genomic_DNA"/>
</dbReference>
<dbReference type="EMBL" id="AE009952">
    <property type="protein sequence ID" value="AAM85822.1"/>
    <property type="molecule type" value="Genomic_DNA"/>
</dbReference>
<dbReference type="EMBL" id="AE017042">
    <property type="protein sequence ID" value="AAS62110.1"/>
    <property type="molecule type" value="Genomic_DNA"/>
</dbReference>
<dbReference type="PIR" id="AI0249">
    <property type="entry name" value="AI0249"/>
</dbReference>
<dbReference type="RefSeq" id="WP_002211208.1">
    <property type="nucleotide sequence ID" value="NZ_WUCM01000075.1"/>
</dbReference>
<dbReference type="RefSeq" id="YP_002347031.1">
    <property type="nucleotide sequence ID" value="NC_003143.1"/>
</dbReference>
<dbReference type="SMR" id="Q7CIB6"/>
<dbReference type="STRING" id="214092.YPO2049"/>
<dbReference type="PaxDb" id="214092-YPO2049"/>
<dbReference type="DNASU" id="1147209"/>
<dbReference type="EnsemblBacteria" id="AAS62110">
    <property type="protein sequence ID" value="AAS62110"/>
    <property type="gene ID" value="YP_1892"/>
</dbReference>
<dbReference type="GeneID" id="57976612"/>
<dbReference type="KEGG" id="ype:YPO2049"/>
<dbReference type="KEGG" id="ypk:y2262"/>
<dbReference type="KEGG" id="ypm:YP_1892"/>
<dbReference type="PATRIC" id="fig|214092.21.peg.2435"/>
<dbReference type="eggNOG" id="COG2227">
    <property type="taxonomic scope" value="Bacteria"/>
</dbReference>
<dbReference type="HOGENOM" id="CLU_052665_0_0_6"/>
<dbReference type="OMA" id="CEWRSDF"/>
<dbReference type="OrthoDB" id="9773188at2"/>
<dbReference type="Proteomes" id="UP000000815">
    <property type="component" value="Chromosome"/>
</dbReference>
<dbReference type="Proteomes" id="UP000001019">
    <property type="component" value="Chromosome"/>
</dbReference>
<dbReference type="Proteomes" id="UP000002490">
    <property type="component" value="Chromosome"/>
</dbReference>
<dbReference type="GO" id="GO:0008168">
    <property type="term" value="F:methyltransferase activity"/>
    <property type="evidence" value="ECO:0000318"/>
    <property type="project" value="GO_Central"/>
</dbReference>
<dbReference type="GO" id="GO:0016765">
    <property type="term" value="F:transferase activity, transferring alkyl or aryl (other than methyl) groups"/>
    <property type="evidence" value="ECO:0007669"/>
    <property type="project" value="UniProtKB-UniRule"/>
</dbReference>
<dbReference type="GO" id="GO:0002098">
    <property type="term" value="P:tRNA wobble uridine modification"/>
    <property type="evidence" value="ECO:0007669"/>
    <property type="project" value="InterPro"/>
</dbReference>
<dbReference type="CDD" id="cd02440">
    <property type="entry name" value="AdoMet_MTases"/>
    <property type="match status" value="1"/>
</dbReference>
<dbReference type="Gene3D" id="3.40.50.150">
    <property type="entry name" value="Vaccinia Virus protein VP39"/>
    <property type="match status" value="1"/>
</dbReference>
<dbReference type="HAMAP" id="MF_01590">
    <property type="entry name" value="tRNA_carboxymethyltr_CmoB"/>
    <property type="match status" value="1"/>
</dbReference>
<dbReference type="InterPro" id="IPR010017">
    <property type="entry name" value="CmoB"/>
</dbReference>
<dbReference type="InterPro" id="IPR027555">
    <property type="entry name" value="Mo5U34_MeTrfas-like"/>
</dbReference>
<dbReference type="InterPro" id="IPR029063">
    <property type="entry name" value="SAM-dependent_MTases_sf"/>
</dbReference>
<dbReference type="NCBIfam" id="NF011650">
    <property type="entry name" value="PRK15068.1"/>
    <property type="match status" value="1"/>
</dbReference>
<dbReference type="NCBIfam" id="TIGR00452">
    <property type="entry name" value="tRNA 5-methoxyuridine(34)/uridine 5-oxyacetic acid(34) synthase CmoB"/>
    <property type="match status" value="1"/>
</dbReference>
<dbReference type="PANTHER" id="PTHR43464">
    <property type="entry name" value="METHYLTRANSFERASE"/>
    <property type="match status" value="1"/>
</dbReference>
<dbReference type="PANTHER" id="PTHR43464:SF95">
    <property type="entry name" value="TRNA U34 CARBOXYMETHYLTRANSFERASE"/>
    <property type="match status" value="1"/>
</dbReference>
<dbReference type="Pfam" id="PF08003">
    <property type="entry name" value="Methyltransf_9"/>
    <property type="match status" value="1"/>
</dbReference>
<dbReference type="SUPFAM" id="SSF53335">
    <property type="entry name" value="S-adenosyl-L-methionine-dependent methyltransferases"/>
    <property type="match status" value="1"/>
</dbReference>
<accession>Q7CIB6</accession>
<accession>Q74U53</accession>
<name>CMOB_YERPE</name>